<name>PKS7_DICDI</name>
<evidence type="ECO:0000250" key="1"/>
<evidence type="ECO:0000255" key="2">
    <source>
        <dbReference type="PROSITE-ProRule" id="PRU00258"/>
    </source>
</evidence>
<evidence type="ECO:0000255" key="3">
    <source>
        <dbReference type="PROSITE-ProRule" id="PRU01348"/>
    </source>
</evidence>
<evidence type="ECO:0000255" key="4">
    <source>
        <dbReference type="PROSITE-ProRule" id="PRU01363"/>
    </source>
</evidence>
<evidence type="ECO:0000255" key="5">
    <source>
        <dbReference type="PROSITE-ProRule" id="PRU10022"/>
    </source>
</evidence>
<sequence length="2513" mass="285227">MNNFKNINLIEKGVAIVGIGFRIPSGNNENSISSPDDLFNNLKNGFDGVSSTSERWSDNFHKLGEISSPNAGLLPFNECKSFDPLFFGINPSEAPLIDPQQRLLLKCTWEALEDASIDPISIRGTNTSVFIGSSNIDYLHTNKHQDSVLKNVIAQSTCAISNRISYCFDFNGPSLSIDTACSSSLNAISQGYHSILNGTSDISIVGGVNLILDVETTKAYSYLSMLSKTHGKCKAFDESGDGFTRGECAGVVVLKNLQDAVKDGNRIYCVINGSSSNVDGNGNMDKVNFYSPSKQSQFNNINSAFKSTNEKLSVNEIQYIEAHGTGTKTGDPIETEAISMAFKNRDKSTPILIGSIKSNIGHCEAGSGVASLIKCCLMFKYQCFLPNIHFKNPNPLIKFNEWNLKVVTSPIPFNRKNEKPVSMMINNFGVTGSNCCLLISEFKKQDYEPYENNYKSNNKNILIPFSANSSNSLNQYQSKFKNIINNQFNFIDFTANQIYSKSNYLCQRSVIAASNSNELFEKILNKKQIQTKNSIISNMSFKGKNPITIFVFSGQGSQYPKMALELYNNEVIFKKSIDLINSKLSKYYGYSVLEKLRSIGDDDTTSIHDPNISQPAVCMISVSLFELYCHWGVNPSFILGHSLGEISASYCSGMIDLDTFCYTVYHRSIAQTKTHGNGRMLSINISDEEFKSMYSQKYPQIEIACYNSPQSIVVAGNESILNEISKELKEKEIFTAMLGSLSSFHTSSQQCTKDSVLKLNIQSNQPKVPIFSTVTTNLFNESNRFNSQYVYDNIINPVRFTQTISNIYKHIESNQLNNDIVFIEIAPHPTLSFYIKQMVPSSLNESVSVYSALHKKKNDVEEFQQTISNLYCQNGYNINFKCQFNNKKSNKKIDLPLYQWSDETYFAQTQTLEQHREEGPPIDHLGISNSFISPFNNSYKTLIDINNKPFQYLKGHMVKGKYYFPGCGYIDNIIQLYKNQDIFISFIEFKTPLILIEGINQCLQTNIQQTGKSEYRAQFHFKDQKSNQWTQSSNSNFQLLDHGNDIPSNYNIEEIIKNKCNLSKLTKNELYTHIKSKTGLNYTGVFKGVTECYIGDNCSLSVVSLESQTNSFLNIPILDTCLHGMLVLINDQCQIVFDKTIGFKYYSSNIPAYFKENKDCFYVYSHLKSKSADSYHGSIIVMLSDGSVLYEIQEVVCKSLIPIKDSLKIEYPNDELYKVHLQSKDSQIPTPSYFKSIIYENDSFHSIVNIPEDLFKYISTLFYKDIIKRCPEININKINSHSVNEIISSFSKISKHERLFRFVFETIKENGILNSLEENDDAYFEFNELVIKSSRIISKLLFPLENDNDNEDLPQSLFQNGLMDKFYKCNNFKKKNQIISHVIKHSIKEIINNNIIIRILEFGGGTASLSVEVIGEIVTLLQENPNYQVEIEYTWSDISPAFIADAKNKINKIINDAAITNGLNVIYLPLTIGESLIETQSIKPSYYDFVIMSNVLHVVKDIKQVVEQMYQLLTPNGQLVFVEPPYKSILIDSIVGSFDQWWSFTDTDIRKDRCGMSQQSWYQLLKTCNFKDIVMSKECIFGSVIQAQKPPISLLNSQPKHDNIIIYGGGNNSRFFENIKLYSNSKSLIQIETIQEFNQFINKSTITNDSIIYFIKTLETLSLDNFAQITLEYIEINKKLLQINSLCKHVLIVSDSRKTNYLASSVVGAARYFDEFQQLKLHTLDFDYDSTQNYINSKNNKMVQFINILTDSKTNVHKEMIIINNKVYYEIVQKEKNLKLKYNSESFENQNNLMCSLSPNLEYQLQSKQIKLRDNQVEVKTIATGINYKDYLNFSGSNSNGDDNTGLPQFGYEFSGIITRVGNNVKDYKVGDNVFGLSNSCTSSHIVTNFKNIQLKPSKISHIEASSIPIDYLASFISLFNVGSLNIEDNESILIHLGSDGFGLSTFEILKWKGFKSNLFVTVNSDETKQYLLDRYGDFISGIYSNTDKSYVTEIKNELIKLGSKKKGVDLILNTLPSDFMDSNFELLTKNARIIDLTSNHLNQSEFLKNINFKYNHSYHNFQLSLFQKNKIQKCLNEISNAIENGELKTIPIKEFTNLNIKDAIKYITNGNIEKITVSHDHEIYSDIIYRYLDEKEFSILKSNYQINSNNLGKNILITGQSGIILEILKWIIKYSNINTIENVIILSRSSLKWELELLINQTKLSNNNIKFHFKSIDVGDSEQVDNAINEILNENQQITNIDSIYHFAFQQITCKVQEINMKHLDISHGAKSMGAINLHNQSIKRNWKLINFVMASSAISLIGSTDLCTYACANTLLDSFSKYRVSLGLPSACINFGSIESTGFVSKNESVSVFLDGGGFHPTPINQVLGLLDLQIQNSGKFTNSMLSNFKPSKFKNNQQISLFLKFDYLMNLKNNSEQTKKENIGNKNIDELFIEKVSELFSTDESKINKNLRLIDYGADSLIIVQLKNWIDKEIGINLITIQQLQNNTINISIKMILNSLMKNNQCGREI</sequence>
<comment type="function">
    <text evidence="1">Probable polyketide synthase.</text>
</comment>
<comment type="cofactor">
    <cofactor evidence="1">
        <name>pantetheine 4'-phosphate</name>
        <dbReference type="ChEBI" id="CHEBI:47942"/>
    </cofactor>
    <text evidence="1">Binds 1 phosphopantetheine covalently.</text>
</comment>
<comment type="domain">
    <text evidence="1">Modular protein that is responsible for the completion of one condensation-processing cycle. The beta-ketoacyl synthase region is responsible for the actual condensation reaction while the acyl/malonyl transferase region is responsible for incorporating carboxylic acids units onto an acyl carrier protein (ACP) domain (By similarity).</text>
</comment>
<comment type="miscellaneous">
    <text>Encoded by one of the numerous copies of polyketide synthase genes and clustered as a quintuplet pks5/pks6/pks7/pks8/pks9 in chromosome 2.</text>
</comment>
<feature type="chain" id="PRO_0000376882" description="Probable polyketide synthase 7">
    <location>
        <begin position="1"/>
        <end position="2513"/>
    </location>
</feature>
<feature type="domain" description="Ketosynthase family 3 (KS3)" evidence="3">
    <location>
        <begin position="11"/>
        <end position="441"/>
    </location>
</feature>
<feature type="domain" description="PKS/mFAS DH" evidence="4">
    <location>
        <begin position="922"/>
        <end position="1206"/>
    </location>
</feature>
<feature type="domain" description="Carrier" evidence="2">
    <location>
        <begin position="2426"/>
        <end position="2503"/>
    </location>
</feature>
<feature type="region of interest" description="Acyl/malonyl transferase">
    <location>
        <begin position="632"/>
        <end position="665"/>
    </location>
</feature>
<feature type="region of interest" description="N-terminal hotdog fold" evidence="4">
    <location>
        <begin position="922"/>
        <end position="1044"/>
    </location>
</feature>
<feature type="region of interest" description="C-terminal hotdog fold" evidence="4">
    <location>
        <begin position="1061"/>
        <end position="1206"/>
    </location>
</feature>
<feature type="active site" description="For beta-ketoacyl synthase activity" evidence="3">
    <location>
        <position position="181"/>
    </location>
</feature>
<feature type="active site" description="For beta-ketoacyl synthase activity" evidence="3">
    <location>
        <position position="323"/>
    </location>
</feature>
<feature type="active site" description="For beta-ketoacyl synthase activity" evidence="3">
    <location>
        <position position="362"/>
    </location>
</feature>
<feature type="active site" description="For acyl/malonyl transferase activity" evidence="5">
    <location>
        <position position="642"/>
    </location>
</feature>
<feature type="active site" description="Proton acceptor; for dehydratase activity" evidence="4">
    <location>
        <position position="956"/>
    </location>
</feature>
<feature type="active site" description="Proton donor; for dehydratase activity" evidence="4">
    <location>
        <position position="1119"/>
    </location>
</feature>
<feature type="modified residue" description="O-(pantetheine 4'-phosphoryl)serine" evidence="2">
    <location>
        <position position="2463"/>
    </location>
</feature>
<keyword id="KW-0596">Phosphopantetheine</keyword>
<keyword id="KW-0597">Phosphoprotein</keyword>
<keyword id="KW-1185">Reference proteome</keyword>
<keyword id="KW-0808">Transferase</keyword>
<reference key="1">
    <citation type="journal article" date="2002" name="Nature">
        <title>Sequence and analysis of chromosome 2 of Dictyostelium discoideum.</title>
        <authorList>
            <person name="Gloeckner G."/>
            <person name="Eichinger L."/>
            <person name="Szafranski K."/>
            <person name="Pachebat J.A."/>
            <person name="Bankier A.T."/>
            <person name="Dear P.H."/>
            <person name="Lehmann R."/>
            <person name="Baumgart C."/>
            <person name="Parra G."/>
            <person name="Abril J.F."/>
            <person name="Guigo R."/>
            <person name="Kumpf K."/>
            <person name="Tunggal B."/>
            <person name="Cox E.C."/>
            <person name="Quail M.A."/>
            <person name="Platzer M."/>
            <person name="Rosenthal A."/>
            <person name="Noegel A.A."/>
        </authorList>
    </citation>
    <scope>NUCLEOTIDE SEQUENCE [LARGE SCALE GENOMIC DNA]</scope>
    <source>
        <strain>AX4</strain>
    </source>
</reference>
<reference key="2">
    <citation type="journal article" date="2005" name="Nature">
        <title>The genome of the social amoeba Dictyostelium discoideum.</title>
        <authorList>
            <person name="Eichinger L."/>
            <person name="Pachebat J.A."/>
            <person name="Gloeckner G."/>
            <person name="Rajandream M.A."/>
            <person name="Sucgang R."/>
            <person name="Berriman M."/>
            <person name="Song J."/>
            <person name="Olsen R."/>
            <person name="Szafranski K."/>
            <person name="Xu Q."/>
            <person name="Tunggal B."/>
            <person name="Kummerfeld S."/>
            <person name="Madera M."/>
            <person name="Konfortov B.A."/>
            <person name="Rivero F."/>
            <person name="Bankier A.T."/>
            <person name="Lehmann R."/>
            <person name="Hamlin N."/>
            <person name="Davies R."/>
            <person name="Gaudet P."/>
            <person name="Fey P."/>
            <person name="Pilcher K."/>
            <person name="Chen G."/>
            <person name="Saunders D."/>
            <person name="Sodergren E.J."/>
            <person name="Davis P."/>
            <person name="Kerhornou A."/>
            <person name="Nie X."/>
            <person name="Hall N."/>
            <person name="Anjard C."/>
            <person name="Hemphill L."/>
            <person name="Bason N."/>
            <person name="Farbrother P."/>
            <person name="Desany B."/>
            <person name="Just E."/>
            <person name="Morio T."/>
            <person name="Rost R."/>
            <person name="Churcher C.M."/>
            <person name="Cooper J."/>
            <person name="Haydock S."/>
            <person name="van Driessche N."/>
            <person name="Cronin A."/>
            <person name="Goodhead I."/>
            <person name="Muzny D.M."/>
            <person name="Mourier T."/>
            <person name="Pain A."/>
            <person name="Lu M."/>
            <person name="Harper D."/>
            <person name="Lindsay R."/>
            <person name="Hauser H."/>
            <person name="James K.D."/>
            <person name="Quiles M."/>
            <person name="Madan Babu M."/>
            <person name="Saito T."/>
            <person name="Buchrieser C."/>
            <person name="Wardroper A."/>
            <person name="Felder M."/>
            <person name="Thangavelu M."/>
            <person name="Johnson D."/>
            <person name="Knights A."/>
            <person name="Loulseged H."/>
            <person name="Mungall K.L."/>
            <person name="Oliver K."/>
            <person name="Price C."/>
            <person name="Quail M.A."/>
            <person name="Urushihara H."/>
            <person name="Hernandez J."/>
            <person name="Rabbinowitsch E."/>
            <person name="Steffen D."/>
            <person name="Sanders M."/>
            <person name="Ma J."/>
            <person name="Kohara Y."/>
            <person name="Sharp S."/>
            <person name="Simmonds M.N."/>
            <person name="Spiegler S."/>
            <person name="Tivey A."/>
            <person name="Sugano S."/>
            <person name="White B."/>
            <person name="Walker D."/>
            <person name="Woodward J.R."/>
            <person name="Winckler T."/>
            <person name="Tanaka Y."/>
            <person name="Shaulsky G."/>
            <person name="Schleicher M."/>
            <person name="Weinstock G.M."/>
            <person name="Rosenthal A."/>
            <person name="Cox E.C."/>
            <person name="Chisholm R.L."/>
            <person name="Gibbs R.A."/>
            <person name="Loomis W.F."/>
            <person name="Platzer M."/>
            <person name="Kay R.R."/>
            <person name="Williams J.G."/>
            <person name="Dear P.H."/>
            <person name="Noegel A.A."/>
            <person name="Barrell B.G."/>
            <person name="Kuspa A."/>
        </authorList>
    </citation>
    <scope>NUCLEOTIDE SEQUENCE [LARGE SCALE GENOMIC DNA]</scope>
    <source>
        <strain>AX4</strain>
    </source>
</reference>
<reference key="3">
    <citation type="journal article" date="2007" name="Bioinformatics">
        <title>Polyketide synthase genes and the natural products potential of Dictyostelium discoideum.</title>
        <authorList>
            <person name="Zucko J."/>
            <person name="Skunca N."/>
            <person name="Curk T."/>
            <person name="Zupan B."/>
            <person name="Long P.F."/>
            <person name="Cullum J."/>
            <person name="Kessin R.H."/>
            <person name="Hranueli D."/>
        </authorList>
    </citation>
    <scope>IDENTIFICATION</scope>
</reference>
<proteinExistence type="inferred from homology"/>
<protein>
    <recommendedName>
        <fullName>Probable polyketide synthase 7</fullName>
        <shortName>dipks7</shortName>
        <ecNumber>2.3.1.-</ecNumber>
    </recommendedName>
</protein>
<organism>
    <name type="scientific">Dictyostelium discoideum</name>
    <name type="common">Social amoeba</name>
    <dbReference type="NCBI Taxonomy" id="44689"/>
    <lineage>
        <taxon>Eukaryota</taxon>
        <taxon>Amoebozoa</taxon>
        <taxon>Evosea</taxon>
        <taxon>Eumycetozoa</taxon>
        <taxon>Dictyostelia</taxon>
        <taxon>Dictyosteliales</taxon>
        <taxon>Dictyosteliaceae</taxon>
        <taxon>Dictyostelium</taxon>
    </lineage>
</organism>
<gene>
    <name type="primary">pks7</name>
    <name type="ORF">DDB_G0271614</name>
</gene>
<accession>B0G100</accession>
<accession>Q86AE6</accession>
<dbReference type="EC" id="2.3.1.-"/>
<dbReference type="EMBL" id="AAFI02000006">
    <property type="protein sequence ID" value="EDR41105.1"/>
    <property type="molecule type" value="Genomic_DNA"/>
</dbReference>
<dbReference type="RefSeq" id="XP_001732963.1">
    <property type="nucleotide sequence ID" value="XM_001732911.1"/>
</dbReference>
<dbReference type="SMR" id="B0G100"/>
<dbReference type="STRING" id="44689.B0G100"/>
<dbReference type="PaxDb" id="44689-DDB0235169"/>
<dbReference type="EnsemblProtists" id="EDR41105">
    <property type="protein sequence ID" value="EDR41105"/>
    <property type="gene ID" value="DDB_G0271614"/>
</dbReference>
<dbReference type="GeneID" id="8618017"/>
<dbReference type="KEGG" id="ddi:DDB_G0271614"/>
<dbReference type="dictyBase" id="DDB_G0271614">
    <property type="gene designation" value="pks7"/>
</dbReference>
<dbReference type="VEuPathDB" id="AmoebaDB:DDB_G0271614"/>
<dbReference type="eggNOG" id="KOG1202">
    <property type="taxonomic scope" value="Eukaryota"/>
</dbReference>
<dbReference type="HOGENOM" id="CLU_000022_31_0_1"/>
<dbReference type="InParanoid" id="B0G100"/>
<dbReference type="PhylomeDB" id="B0G100"/>
<dbReference type="PRO" id="PR:B0G100"/>
<dbReference type="Proteomes" id="UP000002195">
    <property type="component" value="Chromosome 2"/>
</dbReference>
<dbReference type="GO" id="GO:0004315">
    <property type="term" value="F:3-oxoacyl-[acyl-carrier-protein] synthase activity"/>
    <property type="evidence" value="ECO:0007669"/>
    <property type="project" value="InterPro"/>
</dbReference>
<dbReference type="GO" id="GO:0016491">
    <property type="term" value="F:oxidoreductase activity"/>
    <property type="evidence" value="ECO:0007669"/>
    <property type="project" value="InterPro"/>
</dbReference>
<dbReference type="GO" id="GO:0006633">
    <property type="term" value="P:fatty acid biosynthetic process"/>
    <property type="evidence" value="ECO:0000318"/>
    <property type="project" value="GO_Central"/>
</dbReference>
<dbReference type="CDD" id="cd02440">
    <property type="entry name" value="AdoMet_MTases"/>
    <property type="match status" value="1"/>
</dbReference>
<dbReference type="CDD" id="cd05195">
    <property type="entry name" value="enoyl_red"/>
    <property type="match status" value="1"/>
</dbReference>
<dbReference type="CDD" id="cd08954">
    <property type="entry name" value="KR_1_FAS_SDR_x"/>
    <property type="match status" value="1"/>
</dbReference>
<dbReference type="CDD" id="cd00833">
    <property type="entry name" value="PKS"/>
    <property type="match status" value="1"/>
</dbReference>
<dbReference type="Gene3D" id="3.40.47.10">
    <property type="match status" value="1"/>
</dbReference>
<dbReference type="Gene3D" id="1.10.1200.10">
    <property type="entry name" value="ACP-like"/>
    <property type="match status" value="1"/>
</dbReference>
<dbReference type="Gene3D" id="3.40.366.10">
    <property type="entry name" value="Malonyl-Coenzyme A Acyl Carrier Protein, domain 2"/>
    <property type="match status" value="1"/>
</dbReference>
<dbReference type="Gene3D" id="3.90.180.10">
    <property type="entry name" value="Medium-chain alcohol dehydrogenases, catalytic domain"/>
    <property type="match status" value="1"/>
</dbReference>
<dbReference type="Gene3D" id="3.40.50.720">
    <property type="entry name" value="NAD(P)-binding Rossmann-like Domain"/>
    <property type="match status" value="2"/>
</dbReference>
<dbReference type="Gene3D" id="3.10.129.110">
    <property type="entry name" value="Polyketide synthase dehydratase"/>
    <property type="match status" value="1"/>
</dbReference>
<dbReference type="Gene3D" id="3.40.50.150">
    <property type="entry name" value="Vaccinia Virus protein VP39"/>
    <property type="match status" value="1"/>
</dbReference>
<dbReference type="InterPro" id="IPR001227">
    <property type="entry name" value="Ac_transferase_dom_sf"/>
</dbReference>
<dbReference type="InterPro" id="IPR036736">
    <property type="entry name" value="ACP-like_sf"/>
</dbReference>
<dbReference type="InterPro" id="IPR014043">
    <property type="entry name" value="Acyl_transferase_dom"/>
</dbReference>
<dbReference type="InterPro" id="IPR016035">
    <property type="entry name" value="Acyl_Trfase/lysoPLipase"/>
</dbReference>
<dbReference type="InterPro" id="IPR013154">
    <property type="entry name" value="ADH-like_N"/>
</dbReference>
<dbReference type="InterPro" id="IPR011032">
    <property type="entry name" value="GroES-like_sf"/>
</dbReference>
<dbReference type="InterPro" id="IPR018201">
    <property type="entry name" value="Ketoacyl_synth_AS"/>
</dbReference>
<dbReference type="InterPro" id="IPR014031">
    <property type="entry name" value="Ketoacyl_synth_C"/>
</dbReference>
<dbReference type="InterPro" id="IPR014030">
    <property type="entry name" value="Ketoacyl_synth_N"/>
</dbReference>
<dbReference type="InterPro" id="IPR016036">
    <property type="entry name" value="Malonyl_transacylase_ACP-bd"/>
</dbReference>
<dbReference type="InterPro" id="IPR013217">
    <property type="entry name" value="Methyltransf_12"/>
</dbReference>
<dbReference type="InterPro" id="IPR036291">
    <property type="entry name" value="NAD(P)-bd_dom_sf"/>
</dbReference>
<dbReference type="InterPro" id="IPR032821">
    <property type="entry name" value="PKS_assoc"/>
</dbReference>
<dbReference type="InterPro" id="IPR020841">
    <property type="entry name" value="PKS_Beta-ketoAc_synthase_dom"/>
</dbReference>
<dbReference type="InterPro" id="IPR042104">
    <property type="entry name" value="PKS_dehydratase_sf"/>
</dbReference>
<dbReference type="InterPro" id="IPR020843">
    <property type="entry name" value="PKS_ER"/>
</dbReference>
<dbReference type="InterPro" id="IPR013968">
    <property type="entry name" value="PKS_KR"/>
</dbReference>
<dbReference type="InterPro" id="IPR049900">
    <property type="entry name" value="PKS_mFAS_DH"/>
</dbReference>
<dbReference type="InterPro" id="IPR050444">
    <property type="entry name" value="Polyketide_Synthase"/>
</dbReference>
<dbReference type="InterPro" id="IPR009081">
    <property type="entry name" value="PP-bd_ACP"/>
</dbReference>
<dbReference type="InterPro" id="IPR029063">
    <property type="entry name" value="SAM-dependent_MTases_sf"/>
</dbReference>
<dbReference type="InterPro" id="IPR016039">
    <property type="entry name" value="Thiolase-like"/>
</dbReference>
<dbReference type="PANTHER" id="PTHR45681:SF7">
    <property type="entry name" value="POLYKETIDE SYNTHASE 13-RELATED"/>
    <property type="match status" value="1"/>
</dbReference>
<dbReference type="PANTHER" id="PTHR45681">
    <property type="entry name" value="POLYKETIDE SYNTHASE 44-RELATED"/>
    <property type="match status" value="1"/>
</dbReference>
<dbReference type="Pfam" id="PF23297">
    <property type="entry name" value="ACP_SdgA_C"/>
    <property type="match status" value="1"/>
</dbReference>
<dbReference type="Pfam" id="PF00698">
    <property type="entry name" value="Acyl_transf_1"/>
    <property type="match status" value="1"/>
</dbReference>
<dbReference type="Pfam" id="PF08240">
    <property type="entry name" value="ADH_N"/>
    <property type="match status" value="1"/>
</dbReference>
<dbReference type="Pfam" id="PF16197">
    <property type="entry name" value="KAsynt_C_assoc"/>
    <property type="match status" value="1"/>
</dbReference>
<dbReference type="Pfam" id="PF00109">
    <property type="entry name" value="ketoacyl-synt"/>
    <property type="match status" value="1"/>
</dbReference>
<dbReference type="Pfam" id="PF02801">
    <property type="entry name" value="Ketoacyl-synt_C"/>
    <property type="match status" value="1"/>
</dbReference>
<dbReference type="Pfam" id="PF08659">
    <property type="entry name" value="KR"/>
    <property type="match status" value="1"/>
</dbReference>
<dbReference type="Pfam" id="PF08242">
    <property type="entry name" value="Methyltransf_12"/>
    <property type="match status" value="1"/>
</dbReference>
<dbReference type="SMART" id="SM00827">
    <property type="entry name" value="PKS_AT"/>
    <property type="match status" value="1"/>
</dbReference>
<dbReference type="SMART" id="SM00829">
    <property type="entry name" value="PKS_ER"/>
    <property type="match status" value="1"/>
</dbReference>
<dbReference type="SMART" id="SM00822">
    <property type="entry name" value="PKS_KR"/>
    <property type="match status" value="1"/>
</dbReference>
<dbReference type="SMART" id="SM00825">
    <property type="entry name" value="PKS_KS"/>
    <property type="match status" value="1"/>
</dbReference>
<dbReference type="SUPFAM" id="SSF47336">
    <property type="entry name" value="ACP-like"/>
    <property type="match status" value="1"/>
</dbReference>
<dbReference type="SUPFAM" id="SSF52151">
    <property type="entry name" value="FabD/lysophospholipase-like"/>
    <property type="match status" value="1"/>
</dbReference>
<dbReference type="SUPFAM" id="SSF50129">
    <property type="entry name" value="GroES-like"/>
    <property type="match status" value="1"/>
</dbReference>
<dbReference type="SUPFAM" id="SSF51735">
    <property type="entry name" value="NAD(P)-binding Rossmann-fold domains"/>
    <property type="match status" value="2"/>
</dbReference>
<dbReference type="SUPFAM" id="SSF55048">
    <property type="entry name" value="Probable ACP-binding domain of malonyl-CoA ACP transacylase"/>
    <property type="match status" value="1"/>
</dbReference>
<dbReference type="SUPFAM" id="SSF53335">
    <property type="entry name" value="S-adenosyl-L-methionine-dependent methyltransferases"/>
    <property type="match status" value="1"/>
</dbReference>
<dbReference type="SUPFAM" id="SSF53901">
    <property type="entry name" value="Thiolase-like"/>
    <property type="match status" value="1"/>
</dbReference>
<dbReference type="PROSITE" id="PS50075">
    <property type="entry name" value="CARRIER"/>
    <property type="match status" value="1"/>
</dbReference>
<dbReference type="PROSITE" id="PS00606">
    <property type="entry name" value="KS3_1"/>
    <property type="match status" value="1"/>
</dbReference>
<dbReference type="PROSITE" id="PS52004">
    <property type="entry name" value="KS3_2"/>
    <property type="match status" value="1"/>
</dbReference>
<dbReference type="PROSITE" id="PS52019">
    <property type="entry name" value="PKS_MFAS_DH"/>
    <property type="match status" value="1"/>
</dbReference>